<proteinExistence type="inferred from homology"/>
<dbReference type="EMBL" id="DQ917513">
    <property type="protein sequence ID" value="ABK63542.1"/>
    <property type="molecule type" value="mRNA"/>
</dbReference>
<dbReference type="SMR" id="A8HDK8"/>
<dbReference type="GO" id="GO:0005576">
    <property type="term" value="C:extracellular region"/>
    <property type="evidence" value="ECO:0007669"/>
    <property type="project" value="UniProtKB-SubCell"/>
</dbReference>
<dbReference type="GO" id="GO:0030550">
    <property type="term" value="F:acetylcholine receptor inhibitor activity"/>
    <property type="evidence" value="ECO:0007669"/>
    <property type="project" value="UniProtKB-KW"/>
</dbReference>
<dbReference type="GO" id="GO:0099106">
    <property type="term" value="F:ion channel regulator activity"/>
    <property type="evidence" value="ECO:0007669"/>
    <property type="project" value="UniProtKB-KW"/>
</dbReference>
<dbReference type="GO" id="GO:0090729">
    <property type="term" value="F:toxin activity"/>
    <property type="evidence" value="ECO:0007669"/>
    <property type="project" value="UniProtKB-KW"/>
</dbReference>
<dbReference type="CDD" id="cd00206">
    <property type="entry name" value="TFP_snake_toxin"/>
    <property type="match status" value="1"/>
</dbReference>
<dbReference type="Gene3D" id="2.10.60.10">
    <property type="entry name" value="CD59"/>
    <property type="match status" value="1"/>
</dbReference>
<dbReference type="InterPro" id="IPR003571">
    <property type="entry name" value="Snake_3FTx"/>
</dbReference>
<dbReference type="InterPro" id="IPR045860">
    <property type="entry name" value="Snake_toxin-like_sf"/>
</dbReference>
<dbReference type="InterPro" id="IPR018354">
    <property type="entry name" value="Snake_toxin_con_site"/>
</dbReference>
<dbReference type="InterPro" id="IPR054131">
    <property type="entry name" value="Toxin_cobra-type"/>
</dbReference>
<dbReference type="Pfam" id="PF21947">
    <property type="entry name" value="Toxin_cobra-type"/>
    <property type="match status" value="1"/>
</dbReference>
<dbReference type="SUPFAM" id="SSF57302">
    <property type="entry name" value="Snake toxin-like"/>
    <property type="match status" value="1"/>
</dbReference>
<dbReference type="PROSITE" id="PS00272">
    <property type="entry name" value="SNAKE_TOXIN"/>
    <property type="match status" value="1"/>
</dbReference>
<evidence type="ECO:0000250" key="1"/>
<evidence type="ECO:0000250" key="2">
    <source>
        <dbReference type="UniProtKB" id="P60615"/>
    </source>
</evidence>
<evidence type="ECO:0000305" key="3"/>
<reference key="1">
    <citation type="journal article" date="2007" name="Cell. Mol. Life Sci.">
        <title>Distinct activities of novel neurotoxins from Australian venomous snakes for nicotinic acetylcholine receptors.</title>
        <authorList>
            <person name="St Pierre L."/>
            <person name="Fischer H."/>
            <person name="Adams D.J."/>
            <person name="Schenning M."/>
            <person name="Lavidis N."/>
            <person name="de Jersey J."/>
            <person name="Masci P.P."/>
            <person name="Lavin M.F."/>
        </authorList>
    </citation>
    <scope>NUCLEOTIDE SEQUENCE [MRNA]</scope>
    <source>
        <tissue>Venom gland</tissue>
    </source>
</reference>
<organism>
    <name type="scientific">Oxyuranus microlepidotus</name>
    <name type="common">Inland taipan</name>
    <name type="synonym">Diemenia microlepidota</name>
    <dbReference type="NCBI Taxonomy" id="111177"/>
    <lineage>
        <taxon>Eukaryota</taxon>
        <taxon>Metazoa</taxon>
        <taxon>Chordata</taxon>
        <taxon>Craniata</taxon>
        <taxon>Vertebrata</taxon>
        <taxon>Euteleostomi</taxon>
        <taxon>Lepidosauria</taxon>
        <taxon>Squamata</taxon>
        <taxon>Bifurcata</taxon>
        <taxon>Unidentata</taxon>
        <taxon>Episquamata</taxon>
        <taxon>Toxicofera</taxon>
        <taxon>Serpentes</taxon>
        <taxon>Colubroidea</taxon>
        <taxon>Elapidae</taxon>
        <taxon>Hydrophiinae</taxon>
        <taxon>Oxyuranus</taxon>
    </lineage>
</organism>
<accession>A8HDK8</accession>
<protein>
    <recommendedName>
        <fullName>Long neurotoxin 2</fullName>
        <shortName>LNTX-2</shortName>
    </recommendedName>
</protein>
<name>3L22_OXYMI</name>
<keyword id="KW-0008">Acetylcholine receptor inhibiting toxin</keyword>
<keyword id="KW-1015">Disulfide bond</keyword>
<keyword id="KW-0872">Ion channel impairing toxin</keyword>
<keyword id="KW-0528">Neurotoxin</keyword>
<keyword id="KW-0629">Postsynaptic neurotoxin</keyword>
<keyword id="KW-0964">Secreted</keyword>
<keyword id="KW-0732">Signal</keyword>
<keyword id="KW-0800">Toxin</keyword>
<sequence length="92" mass="10267">MKTLLLTLVVVTIVCLDLGYTRRCFITPDVRSERCPPGQEVCYTKTWCDGFCSSRGKRVDLGCAATCPTPKKKGIDIICCSKDNCNTFPKWP</sequence>
<comment type="function">
    <text evidence="2">Binds with high affinity to muscular (alpha-1/CHRNA1) and neuronal (alpha-7/CHRNA7) nicotinic acetylcholine receptor (nAChR) and inhibits acetylcholine from binding to the receptor, thereby impairing neuromuscular and neuronal transmission.</text>
</comment>
<comment type="subcellular location">
    <subcellularLocation>
        <location evidence="1">Secreted</location>
    </subcellularLocation>
</comment>
<comment type="tissue specificity">
    <text evidence="3">Expressed by the venom gland.</text>
</comment>
<comment type="similarity">
    <text evidence="3">Belongs to the three-finger toxin family. Long-chain subfamily. Type II alpha-neurotoxin sub-subfamily.</text>
</comment>
<feature type="signal peptide" evidence="1">
    <location>
        <begin position="1"/>
        <end position="21"/>
    </location>
</feature>
<feature type="chain" id="PRO_5000279921" description="Long neurotoxin 2">
    <location>
        <begin position="22"/>
        <end position="92"/>
    </location>
</feature>
<feature type="disulfide bond" evidence="1">
    <location>
        <begin position="24"/>
        <end position="42"/>
    </location>
</feature>
<feature type="disulfide bond" evidence="1">
    <location>
        <begin position="35"/>
        <end position="63"/>
    </location>
</feature>
<feature type="disulfide bond" evidence="1">
    <location>
        <begin position="48"/>
        <end position="52"/>
    </location>
</feature>
<feature type="disulfide bond" evidence="1">
    <location>
        <begin position="67"/>
        <end position="79"/>
    </location>
</feature>
<feature type="disulfide bond" evidence="1">
    <location>
        <begin position="80"/>
        <end position="85"/>
    </location>
</feature>